<keyword id="KW-0021">Allosteric enzyme</keyword>
<keyword id="KW-0067">ATP-binding</keyword>
<keyword id="KW-0963">Cytoplasm</keyword>
<keyword id="KW-0324">Glycolysis</keyword>
<keyword id="KW-0418">Kinase</keyword>
<keyword id="KW-0460">Magnesium</keyword>
<keyword id="KW-0479">Metal-binding</keyword>
<keyword id="KW-0547">Nucleotide-binding</keyword>
<keyword id="KW-0808">Transferase</keyword>
<feature type="chain" id="PRO_0000111934" description="ATP-dependent 6-phosphofructokinase">
    <location>
        <begin position="1"/>
        <end position="319"/>
    </location>
</feature>
<feature type="active site" description="Proton acceptor" evidence="1">
    <location>
        <position position="127"/>
    </location>
</feature>
<feature type="binding site" evidence="1">
    <location>
        <position position="11"/>
    </location>
    <ligand>
        <name>ATP</name>
        <dbReference type="ChEBI" id="CHEBI:30616"/>
    </ligand>
</feature>
<feature type="binding site" evidence="1">
    <location>
        <begin position="21"/>
        <end position="25"/>
    </location>
    <ligand>
        <name>ADP</name>
        <dbReference type="ChEBI" id="CHEBI:456216"/>
        <note>allosteric activator; ligand shared between dimeric partners</note>
    </ligand>
</feature>
<feature type="binding site" evidence="1">
    <location>
        <begin position="72"/>
        <end position="73"/>
    </location>
    <ligand>
        <name>ATP</name>
        <dbReference type="ChEBI" id="CHEBI:30616"/>
    </ligand>
</feature>
<feature type="binding site" evidence="1">
    <location>
        <begin position="102"/>
        <end position="105"/>
    </location>
    <ligand>
        <name>ATP</name>
        <dbReference type="ChEBI" id="CHEBI:30616"/>
    </ligand>
</feature>
<feature type="binding site" evidence="1">
    <location>
        <position position="103"/>
    </location>
    <ligand>
        <name>Mg(2+)</name>
        <dbReference type="ChEBI" id="CHEBI:18420"/>
        <note>catalytic</note>
    </ligand>
</feature>
<feature type="binding site" description="in other chain" evidence="1">
    <location>
        <begin position="125"/>
        <end position="127"/>
    </location>
    <ligand>
        <name>substrate</name>
        <note>ligand shared between dimeric partners</note>
    </ligand>
</feature>
<feature type="binding site" description="in other chain" evidence="1">
    <location>
        <position position="154"/>
    </location>
    <ligand>
        <name>ADP</name>
        <dbReference type="ChEBI" id="CHEBI:456216"/>
        <note>allosteric activator; ligand shared between dimeric partners</note>
    </ligand>
</feature>
<feature type="binding site" description="in other chain" evidence="1">
    <location>
        <begin position="169"/>
        <end position="171"/>
    </location>
    <ligand>
        <name>substrate</name>
        <note>ligand shared between dimeric partners</note>
    </ligand>
</feature>
<feature type="binding site" description="in other chain" evidence="1">
    <location>
        <begin position="185"/>
        <end position="187"/>
    </location>
    <ligand>
        <name>ADP</name>
        <dbReference type="ChEBI" id="CHEBI:456216"/>
        <note>allosteric activator; ligand shared between dimeric partners</note>
    </ligand>
</feature>
<feature type="binding site" description="in other chain" evidence="1">
    <location>
        <position position="211"/>
    </location>
    <ligand>
        <name>ADP</name>
        <dbReference type="ChEBI" id="CHEBI:456216"/>
        <note>allosteric activator; ligand shared between dimeric partners</note>
    </ligand>
</feature>
<feature type="binding site" description="in other chain" evidence="1">
    <location>
        <begin position="213"/>
        <end position="215"/>
    </location>
    <ligand>
        <name>ADP</name>
        <dbReference type="ChEBI" id="CHEBI:456216"/>
        <note>allosteric activator; ligand shared between dimeric partners</note>
    </ligand>
</feature>
<feature type="binding site" description="in other chain" evidence="1">
    <location>
        <position position="222"/>
    </location>
    <ligand>
        <name>substrate</name>
        <note>ligand shared between dimeric partners</note>
    </ligand>
</feature>
<feature type="binding site" evidence="1">
    <location>
        <position position="243"/>
    </location>
    <ligand>
        <name>substrate</name>
        <note>ligand shared between dimeric partners</note>
    </ligand>
</feature>
<feature type="binding site" description="in other chain" evidence="1">
    <location>
        <begin position="249"/>
        <end position="252"/>
    </location>
    <ligand>
        <name>substrate</name>
        <note>ligand shared between dimeric partners</note>
    </ligand>
</feature>
<evidence type="ECO:0000255" key="1">
    <source>
        <dbReference type="HAMAP-Rule" id="MF_00339"/>
    </source>
</evidence>
<protein>
    <recommendedName>
        <fullName evidence="1">ATP-dependent 6-phosphofructokinase</fullName>
        <shortName evidence="1">ATP-PFK</shortName>
        <shortName evidence="1">Phosphofructokinase</shortName>
        <ecNumber evidence="1">2.7.1.11</ecNumber>
    </recommendedName>
    <alternativeName>
        <fullName evidence="1">Phosphohexokinase</fullName>
    </alternativeName>
</protein>
<dbReference type="EC" id="2.7.1.11" evidence="1"/>
<dbReference type="EMBL" id="AY034597">
    <property type="protein sequence ID" value="AAK57729.1"/>
    <property type="molecule type" value="Genomic_DNA"/>
</dbReference>
<dbReference type="SMR" id="Q93LR4"/>
<dbReference type="STRING" id="1421.A2J09_12970"/>
<dbReference type="UniPathway" id="UPA00109">
    <property type="reaction ID" value="UER00182"/>
</dbReference>
<dbReference type="GO" id="GO:0005945">
    <property type="term" value="C:6-phosphofructokinase complex"/>
    <property type="evidence" value="ECO:0007669"/>
    <property type="project" value="TreeGrafter"/>
</dbReference>
<dbReference type="GO" id="GO:0003872">
    <property type="term" value="F:6-phosphofructokinase activity"/>
    <property type="evidence" value="ECO:0007669"/>
    <property type="project" value="UniProtKB-UniRule"/>
</dbReference>
<dbReference type="GO" id="GO:0016208">
    <property type="term" value="F:AMP binding"/>
    <property type="evidence" value="ECO:0007669"/>
    <property type="project" value="TreeGrafter"/>
</dbReference>
<dbReference type="GO" id="GO:0005524">
    <property type="term" value="F:ATP binding"/>
    <property type="evidence" value="ECO:0007669"/>
    <property type="project" value="UniProtKB-KW"/>
</dbReference>
<dbReference type="GO" id="GO:0070095">
    <property type="term" value="F:fructose-6-phosphate binding"/>
    <property type="evidence" value="ECO:0007669"/>
    <property type="project" value="TreeGrafter"/>
</dbReference>
<dbReference type="GO" id="GO:0042802">
    <property type="term" value="F:identical protein binding"/>
    <property type="evidence" value="ECO:0007669"/>
    <property type="project" value="TreeGrafter"/>
</dbReference>
<dbReference type="GO" id="GO:0046872">
    <property type="term" value="F:metal ion binding"/>
    <property type="evidence" value="ECO:0007669"/>
    <property type="project" value="UniProtKB-KW"/>
</dbReference>
<dbReference type="GO" id="GO:0048029">
    <property type="term" value="F:monosaccharide binding"/>
    <property type="evidence" value="ECO:0007669"/>
    <property type="project" value="TreeGrafter"/>
</dbReference>
<dbReference type="GO" id="GO:0061621">
    <property type="term" value="P:canonical glycolysis"/>
    <property type="evidence" value="ECO:0007669"/>
    <property type="project" value="TreeGrafter"/>
</dbReference>
<dbReference type="GO" id="GO:0030388">
    <property type="term" value="P:fructose 1,6-bisphosphate metabolic process"/>
    <property type="evidence" value="ECO:0007669"/>
    <property type="project" value="TreeGrafter"/>
</dbReference>
<dbReference type="GO" id="GO:0006002">
    <property type="term" value="P:fructose 6-phosphate metabolic process"/>
    <property type="evidence" value="ECO:0007669"/>
    <property type="project" value="InterPro"/>
</dbReference>
<dbReference type="FunFam" id="3.40.50.450:FF:000001">
    <property type="entry name" value="ATP-dependent 6-phosphofructokinase"/>
    <property type="match status" value="1"/>
</dbReference>
<dbReference type="FunFam" id="3.40.50.460:FF:000002">
    <property type="entry name" value="ATP-dependent 6-phosphofructokinase"/>
    <property type="match status" value="1"/>
</dbReference>
<dbReference type="Gene3D" id="3.40.50.450">
    <property type="match status" value="1"/>
</dbReference>
<dbReference type="Gene3D" id="3.40.50.460">
    <property type="entry name" value="Phosphofructokinase domain"/>
    <property type="match status" value="1"/>
</dbReference>
<dbReference type="HAMAP" id="MF_00339">
    <property type="entry name" value="Phosphofructokinase_I_B1"/>
    <property type="match status" value="1"/>
</dbReference>
<dbReference type="InterPro" id="IPR022953">
    <property type="entry name" value="ATP_PFK"/>
</dbReference>
<dbReference type="InterPro" id="IPR012003">
    <property type="entry name" value="ATP_PFK_prok-type"/>
</dbReference>
<dbReference type="InterPro" id="IPR012828">
    <property type="entry name" value="PFKA_ATP_prok"/>
</dbReference>
<dbReference type="InterPro" id="IPR015912">
    <property type="entry name" value="Phosphofructokinase_CS"/>
</dbReference>
<dbReference type="InterPro" id="IPR000023">
    <property type="entry name" value="Phosphofructokinase_dom"/>
</dbReference>
<dbReference type="InterPro" id="IPR035966">
    <property type="entry name" value="PKF_sf"/>
</dbReference>
<dbReference type="NCBIfam" id="TIGR02482">
    <property type="entry name" value="PFKA_ATP"/>
    <property type="match status" value="1"/>
</dbReference>
<dbReference type="NCBIfam" id="NF002872">
    <property type="entry name" value="PRK03202.1"/>
    <property type="match status" value="1"/>
</dbReference>
<dbReference type="PANTHER" id="PTHR13697:SF4">
    <property type="entry name" value="ATP-DEPENDENT 6-PHOSPHOFRUCTOKINASE"/>
    <property type="match status" value="1"/>
</dbReference>
<dbReference type="PANTHER" id="PTHR13697">
    <property type="entry name" value="PHOSPHOFRUCTOKINASE"/>
    <property type="match status" value="1"/>
</dbReference>
<dbReference type="Pfam" id="PF00365">
    <property type="entry name" value="PFK"/>
    <property type="match status" value="1"/>
</dbReference>
<dbReference type="PIRSF" id="PIRSF000532">
    <property type="entry name" value="ATP_PFK_prok"/>
    <property type="match status" value="1"/>
</dbReference>
<dbReference type="PRINTS" id="PR00476">
    <property type="entry name" value="PHFRCTKINASE"/>
</dbReference>
<dbReference type="SUPFAM" id="SSF53784">
    <property type="entry name" value="Phosphofructokinase"/>
    <property type="match status" value="1"/>
</dbReference>
<dbReference type="PROSITE" id="PS00433">
    <property type="entry name" value="PHOSPHOFRUCTOKINASE"/>
    <property type="match status" value="1"/>
</dbReference>
<name>PFKA_LYSSH</name>
<comment type="function">
    <text evidence="1">Catalyzes the phosphorylation of D-fructose 6-phosphate to fructose 1,6-bisphosphate by ATP, the first committing step of glycolysis.</text>
</comment>
<comment type="catalytic activity">
    <reaction evidence="1">
        <text>beta-D-fructose 6-phosphate + ATP = beta-D-fructose 1,6-bisphosphate + ADP + H(+)</text>
        <dbReference type="Rhea" id="RHEA:16109"/>
        <dbReference type="ChEBI" id="CHEBI:15378"/>
        <dbReference type="ChEBI" id="CHEBI:30616"/>
        <dbReference type="ChEBI" id="CHEBI:32966"/>
        <dbReference type="ChEBI" id="CHEBI:57634"/>
        <dbReference type="ChEBI" id="CHEBI:456216"/>
        <dbReference type="EC" id="2.7.1.11"/>
    </reaction>
</comment>
<comment type="cofactor">
    <cofactor evidence="1">
        <name>Mg(2+)</name>
        <dbReference type="ChEBI" id="CHEBI:18420"/>
    </cofactor>
</comment>
<comment type="activity regulation">
    <text evidence="1">Allosterically activated by ADP and other diphosphonucleosides, and allosterically inhibited by phosphoenolpyruvate.</text>
</comment>
<comment type="pathway">
    <text evidence="1">Carbohydrate degradation; glycolysis; D-glyceraldehyde 3-phosphate and glycerone phosphate from D-glucose: step 3/4.</text>
</comment>
<comment type="subunit">
    <text evidence="1">Homotetramer.</text>
</comment>
<comment type="subcellular location">
    <subcellularLocation>
        <location evidence="1">Cytoplasm</location>
    </subcellularLocation>
</comment>
<comment type="similarity">
    <text evidence="1">Belongs to the phosphofructokinase type A (PFKA) family. ATP-dependent PFK group I subfamily. Prokaryotic clade 'B1' sub-subfamily.</text>
</comment>
<accession>Q93LR4</accession>
<proteinExistence type="inferred from homology"/>
<gene>
    <name evidence="1" type="primary">pfkA</name>
    <name type="synonym">pfk</name>
</gene>
<sequence>MKKIAVLTSGGDVPGMNAAIRAVVRKAAFHGINVVGIKHGYEGLVKGYLEELDLGSVGGIIQRGGTHLNSARCPEFKEDAVQQQGIENLRAAGIEGLVVIGGDGSYRGAMDLVKKGFPAVGVPGTIDNDVPGTEYTIGFDTALNTVVESIDKIRDTATSHENSFIVEVMGRDAGDIALWAGLAAGAETVLIPEEDYDLDDIVARLDRGAARGKKHSIIIVAEGVMSGNELAKLIKEKTGKETRVSVLGHIQRGGSPTARDRVLASQFGAHAVELLMEGKYGRAVGIRNHQVIDYDMPEAFEKNHEADVSLYTLMKELSI</sequence>
<organism>
    <name type="scientific">Lysinibacillus sphaericus</name>
    <name type="common">Bacillus sphaericus</name>
    <dbReference type="NCBI Taxonomy" id="1421"/>
    <lineage>
        <taxon>Bacteria</taxon>
        <taxon>Bacillati</taxon>
        <taxon>Bacillota</taxon>
        <taxon>Bacilli</taxon>
        <taxon>Bacillales</taxon>
        <taxon>Bacillaceae</taxon>
        <taxon>Lysinibacillus</taxon>
    </lineage>
</organism>
<reference key="1">
    <citation type="submission" date="2001-05" db="EMBL/GenBank/DDBJ databases">
        <title>6-phosphofructokinase of Bacillus sphaericus 2362.</title>
        <authorList>
            <person name="Alice A.F."/>
            <person name="Perez Martinez G."/>
            <person name="Sanchez Rivas C."/>
        </authorList>
    </citation>
    <scope>NUCLEOTIDE SEQUENCE [GENOMIC DNA]</scope>
    <source>
        <strain>2362</strain>
    </source>
</reference>